<comment type="function">
    <text evidence="7 11">Highly reducing polyketide synthase; part of the gene cluster that mediates the biosynthesis of calbistrin A and related compounds. Calbistrin A is a secondary metabolite with an interesting structure that was recently found to have bioactivity against leukemia cells. It consists of two polyketides linked by an ester bond: a bicyclic decalin containing polyketide and a linear 12 carbon dioic acid structure (PubMed:30598828). The polyketide synthase calA is probably responsible for forming the decalin moiety. Because calA lacks a designated enoylreductase (ER) domain, the required activity is provided by the trans-enoyl reductase calK (PubMed:30598828). Following release from the PKS, calF then probably catalyzes the oxidation and the subsequent Diels Alder cycloisomerization that lead to the formation of the decalin moiety (Probable). The decalin polyketide backbone includes two C-methyl groups, at C7 and C11 in backbone, of which the C7 position is probably methylated by the methyltransferase domain of calA. A candidate for adding the methyl group at C11, if not done by CalA, is the cluster methyltransferase calH (Probable). Several additional tailoring enzymes within the cluster could be involved in the modification of the decalin polyketide product. Those include the 3 cytochrome P450 monooxygenases CalE, CalG and CalL, of which one might be responsible for the introduction of the extra hydroxyl group attached to the backbone of the decalin moiety, at position C9 in the backbone, that allows for attachment of the linear moiety (Probable). One tailoring enzyme activity that is expected to be involved in biosynthesis of calbistrin is an acyltransferase for connecting the two polyketide synthase products, and which could be performed by the cluster acyltransferase calJ (Probable). The enzyme responsible for the biosynthesis of the linear moiety, probably a second PKS, has not been identified yet (Probable).</text>
</comment>
<comment type="pathway">
    <text evidence="7">Secondary metabolite biosynthesis.</text>
</comment>
<comment type="induction">
    <text evidence="7">Expression is induced in complex medium (Czapek yeast autolysate medium) supporting calbistrin production (PubMed:30598828). Expression is positively regulated by the calbistrin biosynthesis cluster-specific transcription factor calC (PubMed:30598828).</text>
</comment>
<comment type="disruption phenotype">
    <text evidence="7">Abolishes the production of calbistrin and of the related metabolites decumbenones, whereas production of unrelated compounds, such as andrastin C, remains unaffected.</text>
</comment>
<comment type="biotechnology">
    <text evidence="6 8">Calbistrin A has been reported to possess a number of interesting bioactivities including antifungal active against Candida albicans and cytotoxic toward both healthy and leukemic human cells.</text>
</comment>
<keyword id="KW-0012">Acyltransferase</keyword>
<keyword id="KW-0489">Methyltransferase</keyword>
<keyword id="KW-0511">Multifunctional enzyme</keyword>
<keyword id="KW-0521">NADP</keyword>
<keyword id="KW-0560">Oxidoreductase</keyword>
<keyword id="KW-0596">Phosphopantetheine</keyword>
<keyword id="KW-0597">Phosphoprotein</keyword>
<keyword id="KW-1185">Reference proteome</keyword>
<keyword id="KW-0808">Transferase</keyword>
<feature type="chain" id="PRO_0000446473" description="Highly reducing polyketide synthase calA">
    <location>
        <begin position="1"/>
        <end position="2910"/>
    </location>
</feature>
<feature type="domain" description="Ketosynthase family 3 (KS3)" evidence="3 11">
    <location>
        <begin position="8"/>
        <end position="444"/>
    </location>
</feature>
<feature type="domain" description="PKS/mFAS DH" evidence="4">
    <location>
        <begin position="948"/>
        <end position="1245"/>
    </location>
</feature>
<feature type="domain" description="Carrier" evidence="2 11">
    <location>
        <begin position="2406"/>
        <end position="2488"/>
    </location>
</feature>
<feature type="region of interest" description="Acyl transferase (AT) domain" evidence="1 11">
    <location>
        <begin position="559"/>
        <end position="875"/>
    </location>
</feature>
<feature type="region of interest" description="N-terminal hotdog fold" evidence="4">
    <location>
        <begin position="948"/>
        <end position="1082"/>
    </location>
</feature>
<feature type="region of interest" description="Dehydratase (DH) domain" evidence="1 11">
    <location>
        <begin position="949"/>
        <end position="1242"/>
    </location>
</feature>
<feature type="region of interest" description="C-terminal hotdog fold" evidence="4">
    <location>
        <begin position="1095"/>
        <end position="1245"/>
    </location>
</feature>
<feature type="region of interest" description="Methyltransferase (MT) domain" evidence="1 11">
    <location>
        <begin position="1399"/>
        <end position="1586"/>
    </location>
</feature>
<feature type="region of interest" description="Ketoreductase (KR)domain" evidence="1 11">
    <location>
        <begin position="2125"/>
        <end position="2298"/>
    </location>
</feature>
<feature type="region of interest" description="Disordered" evidence="5">
    <location>
        <begin position="2492"/>
        <end position="2565"/>
    </location>
</feature>
<feature type="region of interest" description="Reductase (R) domain" evidence="1 11">
    <location>
        <begin position="2597"/>
        <end position="2826"/>
    </location>
</feature>
<feature type="compositionally biased region" description="Polar residues" evidence="5">
    <location>
        <begin position="2522"/>
        <end position="2534"/>
    </location>
</feature>
<feature type="compositionally biased region" description="Low complexity" evidence="5">
    <location>
        <begin position="2550"/>
        <end position="2559"/>
    </location>
</feature>
<feature type="active site" description="For beta-ketoacyl synthase activity" evidence="3">
    <location>
        <position position="181"/>
    </location>
</feature>
<feature type="active site" description="For beta-ketoacyl synthase activity" evidence="3">
    <location>
        <position position="320"/>
    </location>
</feature>
<feature type="active site" description="For beta-ketoacyl synthase activity" evidence="3">
    <location>
        <position position="364"/>
    </location>
</feature>
<feature type="active site" description="Proton acceptor; for dehydratase activity" evidence="4">
    <location>
        <position position="980"/>
    </location>
</feature>
<feature type="active site" description="Proton donor; for dehydratase activity" evidence="4">
    <location>
        <position position="1156"/>
    </location>
</feature>
<feature type="modified residue" description="O-(pantetheine 4'-phosphoryl)serine" evidence="2">
    <location>
        <position position="2448"/>
    </location>
</feature>
<dbReference type="EC" id="2.3.1.-" evidence="11"/>
<dbReference type="EMBL" id="MDYL01000013">
    <property type="protein sequence ID" value="OQD73955.1"/>
    <property type="molecule type" value="Genomic_DNA"/>
</dbReference>
<dbReference type="SMR" id="A0A1V6PAF7"/>
<dbReference type="STRING" id="69771.A0A1V6PAF7"/>
<dbReference type="OMA" id="SWFLKNF"/>
<dbReference type="OrthoDB" id="329835at2759"/>
<dbReference type="Proteomes" id="UP000191522">
    <property type="component" value="Unassembled WGS sequence"/>
</dbReference>
<dbReference type="GO" id="GO:0004315">
    <property type="term" value="F:3-oxoacyl-[acyl-carrier-protein] synthase activity"/>
    <property type="evidence" value="ECO:0007669"/>
    <property type="project" value="InterPro"/>
</dbReference>
<dbReference type="GO" id="GO:0004312">
    <property type="term" value="F:fatty acid synthase activity"/>
    <property type="evidence" value="ECO:0007669"/>
    <property type="project" value="TreeGrafter"/>
</dbReference>
<dbReference type="GO" id="GO:0008168">
    <property type="term" value="F:methyltransferase activity"/>
    <property type="evidence" value="ECO:0007669"/>
    <property type="project" value="UniProtKB-KW"/>
</dbReference>
<dbReference type="GO" id="GO:0016491">
    <property type="term" value="F:oxidoreductase activity"/>
    <property type="evidence" value="ECO:0007669"/>
    <property type="project" value="UniProtKB-KW"/>
</dbReference>
<dbReference type="GO" id="GO:0031177">
    <property type="term" value="F:phosphopantetheine binding"/>
    <property type="evidence" value="ECO:0007669"/>
    <property type="project" value="InterPro"/>
</dbReference>
<dbReference type="GO" id="GO:0006633">
    <property type="term" value="P:fatty acid biosynthetic process"/>
    <property type="evidence" value="ECO:0007669"/>
    <property type="project" value="InterPro"/>
</dbReference>
<dbReference type="GO" id="GO:1901336">
    <property type="term" value="P:lactone biosynthetic process"/>
    <property type="evidence" value="ECO:0007669"/>
    <property type="project" value="UniProtKB-ARBA"/>
</dbReference>
<dbReference type="GO" id="GO:0032259">
    <property type="term" value="P:methylation"/>
    <property type="evidence" value="ECO:0007669"/>
    <property type="project" value="UniProtKB-KW"/>
</dbReference>
<dbReference type="GO" id="GO:0030639">
    <property type="term" value="P:polyketide biosynthetic process"/>
    <property type="evidence" value="ECO:0007669"/>
    <property type="project" value="UniProtKB-ARBA"/>
</dbReference>
<dbReference type="CDD" id="cd02440">
    <property type="entry name" value="AdoMet_MTases"/>
    <property type="match status" value="1"/>
</dbReference>
<dbReference type="CDD" id="cd00833">
    <property type="entry name" value="PKS"/>
    <property type="match status" value="1"/>
</dbReference>
<dbReference type="FunFam" id="3.40.47.10:FF:000019">
    <property type="entry name" value="Polyketide synthase type I"/>
    <property type="match status" value="1"/>
</dbReference>
<dbReference type="Gene3D" id="3.30.70.3290">
    <property type="match status" value="1"/>
</dbReference>
<dbReference type="Gene3D" id="3.40.47.10">
    <property type="match status" value="1"/>
</dbReference>
<dbReference type="Gene3D" id="3.40.366.10">
    <property type="entry name" value="Malonyl-Coenzyme A Acyl Carrier Protein, domain 2"/>
    <property type="match status" value="1"/>
</dbReference>
<dbReference type="Gene3D" id="3.40.50.720">
    <property type="entry name" value="NAD(P)-binding Rossmann-like Domain"/>
    <property type="match status" value="3"/>
</dbReference>
<dbReference type="Gene3D" id="3.10.129.110">
    <property type="entry name" value="Polyketide synthase dehydratase"/>
    <property type="match status" value="1"/>
</dbReference>
<dbReference type="Gene3D" id="3.40.50.150">
    <property type="entry name" value="Vaccinia Virus protein VP39"/>
    <property type="match status" value="1"/>
</dbReference>
<dbReference type="InterPro" id="IPR001227">
    <property type="entry name" value="Ac_transferase_dom_sf"/>
</dbReference>
<dbReference type="InterPro" id="IPR036736">
    <property type="entry name" value="ACP-like_sf"/>
</dbReference>
<dbReference type="InterPro" id="IPR014043">
    <property type="entry name" value="Acyl_transferase_dom"/>
</dbReference>
<dbReference type="InterPro" id="IPR016035">
    <property type="entry name" value="Acyl_Trfase/lysoPLipase"/>
</dbReference>
<dbReference type="InterPro" id="IPR013120">
    <property type="entry name" value="Far_NAD-bd"/>
</dbReference>
<dbReference type="InterPro" id="IPR018201">
    <property type="entry name" value="Ketoacyl_synth_AS"/>
</dbReference>
<dbReference type="InterPro" id="IPR014031">
    <property type="entry name" value="Ketoacyl_synth_C"/>
</dbReference>
<dbReference type="InterPro" id="IPR014030">
    <property type="entry name" value="Ketoacyl_synth_N"/>
</dbReference>
<dbReference type="InterPro" id="IPR016036">
    <property type="entry name" value="Malonyl_transacylase_ACP-bd"/>
</dbReference>
<dbReference type="InterPro" id="IPR013217">
    <property type="entry name" value="Methyltransf_12"/>
</dbReference>
<dbReference type="InterPro" id="IPR036291">
    <property type="entry name" value="NAD(P)-bd_dom_sf"/>
</dbReference>
<dbReference type="InterPro" id="IPR056501">
    <property type="entry name" value="NAD-bd_HRPKS_sdrA"/>
</dbReference>
<dbReference type="InterPro" id="IPR020841">
    <property type="entry name" value="PKS_Beta-ketoAc_synthase_dom"/>
</dbReference>
<dbReference type="InterPro" id="IPR042104">
    <property type="entry name" value="PKS_dehydratase_sf"/>
</dbReference>
<dbReference type="InterPro" id="IPR020807">
    <property type="entry name" value="PKS_DH"/>
</dbReference>
<dbReference type="InterPro" id="IPR049551">
    <property type="entry name" value="PKS_DH_C"/>
</dbReference>
<dbReference type="InterPro" id="IPR049552">
    <property type="entry name" value="PKS_DH_N"/>
</dbReference>
<dbReference type="InterPro" id="IPR013968">
    <property type="entry name" value="PKS_KR"/>
</dbReference>
<dbReference type="InterPro" id="IPR049900">
    <property type="entry name" value="PKS_mFAS_DH"/>
</dbReference>
<dbReference type="InterPro" id="IPR050091">
    <property type="entry name" value="PKS_NRPS_Biosynth_Enz"/>
</dbReference>
<dbReference type="InterPro" id="IPR020806">
    <property type="entry name" value="PKS_PP-bd"/>
</dbReference>
<dbReference type="InterPro" id="IPR009081">
    <property type="entry name" value="PP-bd_ACP"/>
</dbReference>
<dbReference type="InterPro" id="IPR006162">
    <property type="entry name" value="Ppantetheine_attach_site"/>
</dbReference>
<dbReference type="InterPro" id="IPR029063">
    <property type="entry name" value="SAM-dependent_MTases_sf"/>
</dbReference>
<dbReference type="InterPro" id="IPR016039">
    <property type="entry name" value="Thiolase-like"/>
</dbReference>
<dbReference type="PANTHER" id="PTHR43775">
    <property type="entry name" value="FATTY ACID SYNTHASE"/>
    <property type="match status" value="1"/>
</dbReference>
<dbReference type="PANTHER" id="PTHR43775:SF20">
    <property type="entry name" value="HYBRID PKS-NRPS SYNTHETASE APDA"/>
    <property type="match status" value="1"/>
</dbReference>
<dbReference type="Pfam" id="PF00698">
    <property type="entry name" value="Acyl_transf_1"/>
    <property type="match status" value="1"/>
</dbReference>
<dbReference type="Pfam" id="PF22621">
    <property type="entry name" value="CurL-like_PKS_C"/>
    <property type="match status" value="1"/>
</dbReference>
<dbReference type="Pfam" id="PF00109">
    <property type="entry name" value="ketoacyl-synt"/>
    <property type="match status" value="1"/>
</dbReference>
<dbReference type="Pfam" id="PF02801">
    <property type="entry name" value="Ketoacyl-synt_C"/>
    <property type="match status" value="1"/>
</dbReference>
<dbReference type="Pfam" id="PF08659">
    <property type="entry name" value="KR"/>
    <property type="match status" value="1"/>
</dbReference>
<dbReference type="Pfam" id="PF08242">
    <property type="entry name" value="Methyltransf_12"/>
    <property type="match status" value="1"/>
</dbReference>
<dbReference type="Pfam" id="PF23114">
    <property type="entry name" value="NAD-bd_HRPKS_sdrA"/>
    <property type="match status" value="1"/>
</dbReference>
<dbReference type="Pfam" id="PF07993">
    <property type="entry name" value="NAD_binding_4"/>
    <property type="match status" value="1"/>
</dbReference>
<dbReference type="Pfam" id="PF21089">
    <property type="entry name" value="PKS_DH_N"/>
    <property type="match status" value="1"/>
</dbReference>
<dbReference type="Pfam" id="PF14765">
    <property type="entry name" value="PS-DH"/>
    <property type="match status" value="1"/>
</dbReference>
<dbReference type="SMART" id="SM00827">
    <property type="entry name" value="PKS_AT"/>
    <property type="match status" value="1"/>
</dbReference>
<dbReference type="SMART" id="SM00826">
    <property type="entry name" value="PKS_DH"/>
    <property type="match status" value="1"/>
</dbReference>
<dbReference type="SMART" id="SM00822">
    <property type="entry name" value="PKS_KR"/>
    <property type="match status" value="1"/>
</dbReference>
<dbReference type="SMART" id="SM00825">
    <property type="entry name" value="PKS_KS"/>
    <property type="match status" value="1"/>
</dbReference>
<dbReference type="SMART" id="SM00823">
    <property type="entry name" value="PKS_PP"/>
    <property type="match status" value="1"/>
</dbReference>
<dbReference type="SUPFAM" id="SSF47336">
    <property type="entry name" value="ACP-like"/>
    <property type="match status" value="1"/>
</dbReference>
<dbReference type="SUPFAM" id="SSF52151">
    <property type="entry name" value="FabD/lysophospholipase-like"/>
    <property type="match status" value="1"/>
</dbReference>
<dbReference type="SUPFAM" id="SSF51735">
    <property type="entry name" value="NAD(P)-binding Rossmann-fold domains"/>
    <property type="match status" value="2"/>
</dbReference>
<dbReference type="SUPFAM" id="SSF55048">
    <property type="entry name" value="Probable ACP-binding domain of malonyl-CoA ACP transacylase"/>
    <property type="match status" value="1"/>
</dbReference>
<dbReference type="SUPFAM" id="SSF53335">
    <property type="entry name" value="S-adenosyl-L-methionine-dependent methyltransferases"/>
    <property type="match status" value="1"/>
</dbReference>
<dbReference type="SUPFAM" id="SSF53901">
    <property type="entry name" value="Thiolase-like"/>
    <property type="match status" value="1"/>
</dbReference>
<dbReference type="PROSITE" id="PS50075">
    <property type="entry name" value="CARRIER"/>
    <property type="match status" value="1"/>
</dbReference>
<dbReference type="PROSITE" id="PS00606">
    <property type="entry name" value="KS3_1"/>
    <property type="match status" value="1"/>
</dbReference>
<dbReference type="PROSITE" id="PS52004">
    <property type="entry name" value="KS3_2"/>
    <property type="match status" value="1"/>
</dbReference>
<dbReference type="PROSITE" id="PS00012">
    <property type="entry name" value="PHOSPHOPANTETHEINE"/>
    <property type="match status" value="1"/>
</dbReference>
<dbReference type="PROSITE" id="PS52019">
    <property type="entry name" value="PKS_MFAS_DH"/>
    <property type="match status" value="1"/>
</dbReference>
<name>CALA_PENDC</name>
<protein>
    <recommendedName>
        <fullName evidence="9">Highly reducing polyketide synthase calA</fullName>
        <shortName evidence="10">HR-PKS calA</shortName>
        <ecNumber evidence="11">2.3.1.-</ecNumber>
    </recommendedName>
    <alternativeName>
        <fullName evidence="9">Calbistrin biosynthesis cluster protein A</fullName>
    </alternativeName>
</protein>
<proteinExistence type="evidence at protein level"/>
<accession>A0A1V6PAF7</accession>
<reference key="1">
    <citation type="journal article" date="2017" name="Nat. Microbiol.">
        <title>Global analysis of biosynthetic gene clusters reveals vast potential of secondary metabolite production in Penicillium species.</title>
        <authorList>
            <person name="Nielsen J.C."/>
            <person name="Grijseels S."/>
            <person name="Prigent S."/>
            <person name="Ji B."/>
            <person name="Dainat J."/>
            <person name="Nielsen K.F."/>
            <person name="Frisvad J.C."/>
            <person name="Workman M."/>
            <person name="Nielsen J."/>
        </authorList>
    </citation>
    <scope>NUCLEOTIDE SEQUENCE [LARGE SCALE GENOMIC DNA]</scope>
    <source>
        <strain>IBT 11843</strain>
    </source>
</reference>
<reference key="2">
    <citation type="journal article" date="1993" name="J. Antibiot.">
        <title>Calbistrins, novel antifungal agents produced by Penicillium restrictum. I. Production, taxonomy of the producing organism and biological activity.</title>
        <authorList>
            <person name="Jackson M."/>
            <person name="Karwowski J.P."/>
            <person name="Humphrey P.E."/>
            <person name="Kohl W.L."/>
            <person name="Barlow G.J."/>
            <person name="Tanaka S.K."/>
        </authorList>
    </citation>
    <scope>BIOTECHNOLOGY</scope>
</reference>
<reference key="3">
    <citation type="journal article" date="2013" name="Molecules">
        <title>Bio-activity and dereplication-based discovery of ophiobolins and other fungal secondary metabolites targeting leukemia cells.</title>
        <authorList>
            <person name="Bladt T.T."/>
            <person name="Duerr C."/>
            <person name="Knudsen P.B."/>
            <person name="Kildgaard S."/>
            <person name="Frisvad J.C."/>
            <person name="Gotfredsen C.H."/>
            <person name="Seiffert M."/>
            <person name="Larsen T.O."/>
        </authorList>
    </citation>
    <scope>BIOTECHNOLOGY</scope>
</reference>
<reference key="4">
    <citation type="journal article" date="2018" name="Fungal Biol. Biotechnol.">
        <title>Identification of the decumbenone biosynthetic gene cluster in Penicillium decumbens and the importance for production of calbistrin.</title>
        <authorList>
            <person name="Grijseels S."/>
            <person name="Pohl C."/>
            <person name="Nielsen J.C."/>
            <person name="Wasil Z."/>
            <person name="Nygaard Y."/>
            <person name="Nielsen J."/>
            <person name="Frisvad J.C."/>
            <person name="Nielsen K.F."/>
            <person name="Workman M."/>
            <person name="Larsen T.O."/>
            <person name="Driessen A.J.M."/>
            <person name="Frandsen R.J.N."/>
        </authorList>
    </citation>
    <scope>IDENTIFICATION</scope>
    <scope>FUNCTION</scope>
    <scope>DOMAIN</scope>
    <scope>DISRUPTION PHENOTYPE</scope>
    <scope>INDUCTION</scope>
    <scope>PATHWAY</scope>
</reference>
<sequence>MAEDMPINEPLAIVGSACRFAGGVSSPSKLWDLLSNPRDVRSEILKSRFNAENYYHPDSAYHGHSNIQHSYLLEEDVAAFDSQFFGIKPVEAKAIDPQQRLLMETVYEGLESAGLTIDSLRDSDTAVYVGLMCGDYEASLLRDLSTAPVYAATGIGRSILSNRVSYFFNWHGPSMTIDTACSSSLVAVHLAAQALRSGESRVALACGSNLLLGPENYIMESKLKMLSPDGRSKMWDKDANGYARGDGVAACVLKTLSAAIEDGDDIECIIRETGVNQDGATTGITMPSATAQQALIRSTYKKAGLDLSKVNDRPQFFEAHGTGTPAGDPIEAEAISKAFFDEQYGTMVAAEPLYVGSIKTILGHTEGTAGLAALLKASLALQHSVVPPNMLLNNLSDKVAPFTKNLEILKAPKAWPSVEAGQPRRASVNSFGFGGTNAHAILESYEPRRHLQNGVTNSEAIVQFTPFVFSALSHQSLRATLSAYADHIQSNPAVNLRDMAYTLQERRSAFPYRVSFAALSADELATKIRAEVEGTKAEELGVRVSAPQTDGKRRKVLGVFTGQGAQYARMGAELLETSATARKIIQELQTCLEQLPEDLRPDFSLEEELRAAADSSRVLTGAFSFLSTVVQLLLVDLLKLAGVQFDAIVAHSSGEMAAAYAAGRLSARDAMCVAYFRGRFASKMESPNGADKKGAMLAAGMSEEDAATLCADEIFAGRVCVAAVNSSSSVTISGDEDAIDEFKLILDDENKFNRKLRVDRAYHSNHVSRRLADYVTLIQSAGVQALEPGKDAPLWISSVYGREVTTDMNLDDEYWGASVARSVQFYQALKLVLEADDYQVALEVGPHPALKGPASQTIQELGKSIPYYGVLSRGTDATVSLASSLGSLWCHLGGEQLDLTGFEKEVNDNKSSLRVVKGLPRYQWNHEASYWHESRASKKHKAQTQPFNQLLGTMMPDSAAHHLSWGHLLRASEIEWASGHQVQSQTVFPAAGYICTAFEGARVLAANRDVRLFELKDFVIHQALTFSHDDAGIEVQASIADIQRPSNDRIKAKFTYSASLGGEDLDLVAEAELHIVFGPSSERTLPHRAARPPHMISVDNERFYTFLATLGYGFEGPFKSLHTLRRKLGSSVCAVNSVPRENTFGRPLLVHPAELDGGIQSLILAYSYPDDDQLLNMHLPTSMSSIRVNPALCQSMTDISVDSRLGRNKSAGFSGDVSLYTSNSECAAIQMQGVELKPLGALTAKDDRKVFSKYQWVKNRLDGDLAACDTTVTKHHQDVLEGLERISTYYLNKLDAEVPVDSPLRKEGPHSNYLNYAHHIVELIQKGEHKVAKKEWLSDSPEDLHQATAHLSDLIDYRMMHLVGQQMPRVLRGETNMLEEMRVSNILDDYYKGAFGSREAGLWIGKIISQLAERYPHLNILEVGAGTGGATTRVLQGLSNKFLSYTFTDVSSGFFEGAAEMFSEHKDRMVFKTFDCGQDPVTQGYAEGTCDVVVAFLVIHATPDLELTMRNIRKLLKPGGLLVVGEGTNNGQPYGSAGFIFGSLPGWWLGADTGRPLSPFVSYSEWERLLKASAFSGIDSTAPQAFQDILGMTVFAAQAVDDRVNFLREPLNPDVLSQSSAAIEYPIKNLVVVGGSTERTRPLVASVTDTLKNHSAQVHTFETLSAVDFSLVDEDATVVSLSELDKPVFQDLTPDEWMAFKTLFSCPTRLFWVTSGRLSEEPFSNMTVGFARTAVFETPALRFQNVDISNLETLTPQDLAEKVLRFHASTSPVPADLKQFAWPLEPEIVIDAQGEELVPRLRHIAERNDRYNSARRPITNETDITKTPATLHNDREGWKLKELPGCASPAEHPGDRLSLEVTHSVLSALRTPYGHQFLVFGIERQSQTRFMALVPTLISVVDVSKGSAIPLPTSTLADSELLTSLAATLVSMAVVDPLMEGDTLVVQNATELFASTIATLATSKKIRIVFVADFARPNVPESWVKLEPYVTQSEIAEILPANTACFVDLSIEASENASVIPSSLPLHHRKENVSTLYSPLGWESGSSSAGTALGQLLHRAWFYAQQEAFAHRQNNATSQVVGITDLLEGLNPGNPATVIDWTLSKTHPVHVSRLDSVVFFKGDKTYWLCGLSGALGVSLVDWMIERGAKYLVLTSRNPNISPDWIAGHKRNGVTVTIVPCDVTNEPAIRAAHQFICETLPPIVGVLNGAMVLRDVSIRNMSYELMSDVFRPKVHGSIHLDRIFRDEPLDFFILFSSINCVIGNLGQANYAAANTFMCSLAAQRRKRGLAATALNVGAIIGAGYMERESSKALDLTVSKMALMHLSEQDYHQLFAEGIDSGRPGSGDEAELTTGLLDIPAATDTENTPKWHSNPAFLDFIVHQVEKNGADSGNEVVASVQDQLAACQSRSEVLAVVKGRFAMQLRNVLQMTTADEDLMALRSRDIGLDSLISVDIRSWFLKNFEVSVPVLKIMGNDTMAELAELAAEQAPASLLPGLGGEAPAPTEEAQANNAASQPVPLTVVPQSDETGSSSADSNHDGSPGESRGGSTGYTTPTTPDPHSTKGPIRIDWDAEIALPNAANIAIEIVPVARPQKIVLTGVSGLLGRSLLLRLLEDASVKKIFCIAVRRLEERLQSEELLLDDRVQYFSGNLEQPRLGLSEEDAIAIFSQADAVIHNGADTSHLKFYPEIKAANAGSTKELISLCMARKVPIHYISTVGVALFGNYESFPQVSIAAHHPPIDGSHGYVAAKWVSERLLEELQRQHGVNVWIHRPSTIVREGADNENAAAQTDWMNALMAYMRKMQAVPVMKNLRGALDFVYVKNAADSILTAVLENKPVGASYTHQVGDIVIPLDNLKEFIEDTGALNVEELPIEKWSARAVTVGLNRGVAALIDSMDDPGQPHYPRLLRQ</sequence>
<evidence type="ECO:0000255" key="1"/>
<evidence type="ECO:0000255" key="2">
    <source>
        <dbReference type="PROSITE-ProRule" id="PRU00258"/>
    </source>
</evidence>
<evidence type="ECO:0000255" key="3">
    <source>
        <dbReference type="PROSITE-ProRule" id="PRU01348"/>
    </source>
</evidence>
<evidence type="ECO:0000255" key="4">
    <source>
        <dbReference type="PROSITE-ProRule" id="PRU01363"/>
    </source>
</evidence>
<evidence type="ECO:0000256" key="5">
    <source>
        <dbReference type="SAM" id="MobiDB-lite"/>
    </source>
</evidence>
<evidence type="ECO:0000269" key="6">
    <source>
    </source>
</evidence>
<evidence type="ECO:0000269" key="7">
    <source>
    </source>
</evidence>
<evidence type="ECO:0000269" key="8">
    <source>
    </source>
</evidence>
<evidence type="ECO:0000303" key="9">
    <source>
    </source>
</evidence>
<evidence type="ECO:0000305" key="10"/>
<evidence type="ECO:0000305" key="11">
    <source>
    </source>
</evidence>
<organism>
    <name type="scientific">Penicillium decumbens</name>
    <dbReference type="NCBI Taxonomy" id="69771"/>
    <lineage>
        <taxon>Eukaryota</taxon>
        <taxon>Fungi</taxon>
        <taxon>Dikarya</taxon>
        <taxon>Ascomycota</taxon>
        <taxon>Pezizomycotina</taxon>
        <taxon>Eurotiomycetes</taxon>
        <taxon>Eurotiomycetidae</taxon>
        <taxon>Eurotiales</taxon>
        <taxon>Aspergillaceae</taxon>
        <taxon>Penicillium</taxon>
    </lineage>
</organism>
<gene>
    <name evidence="9" type="primary">calA</name>
    <name type="ORF">PENDEC_c013G00595</name>
</gene>